<protein>
    <recommendedName>
        <fullName>Zeaxanthin epoxidase, chloroplastic</fullName>
        <shortName>OsZEP1</shortName>
        <ecNumber>1.14.15.21</ecNumber>
    </recommendedName>
    <alternativeName>
        <fullName>Protein ABA DEFICIENT 1</fullName>
        <shortName>OsABA1</shortName>
    </alternativeName>
</protein>
<proteinExistence type="evidence at transcript level"/>
<dbReference type="EC" id="1.14.15.21"/>
<dbReference type="EMBL" id="AB050884">
    <property type="protein sequence ID" value="BAB39765.1"/>
    <property type="status" value="ALT_FRAME"/>
    <property type="molecule type" value="mRNA"/>
</dbReference>
<dbReference type="EMBL" id="AL606448">
    <property type="protein sequence ID" value="CAD40867.2"/>
    <property type="status" value="ALT_SEQ"/>
    <property type="molecule type" value="Genomic_DNA"/>
</dbReference>
<dbReference type="EMBL" id="AP008210">
    <property type="protein sequence ID" value="BAF14840.1"/>
    <property type="molecule type" value="Genomic_DNA"/>
</dbReference>
<dbReference type="EMBL" id="AP014960">
    <property type="protein sequence ID" value="BAS89435.1"/>
    <property type="molecule type" value="Genomic_DNA"/>
</dbReference>
<dbReference type="RefSeq" id="XP_015636352.1">
    <property type="nucleotide sequence ID" value="XM_015780866.1"/>
</dbReference>
<dbReference type="RefSeq" id="XP_015636353.1">
    <property type="nucleotide sequence ID" value="XM_015780867.1"/>
</dbReference>
<dbReference type="SMR" id="Q0JCU7"/>
<dbReference type="FunCoup" id="Q0JCU7">
    <property type="interactions" value="408"/>
</dbReference>
<dbReference type="STRING" id="39947.Q0JCU7"/>
<dbReference type="PaxDb" id="39947-Q0JCU7"/>
<dbReference type="EnsemblPlants" id="Os04t0448900-01">
    <property type="protein sequence ID" value="Os04t0448900-01"/>
    <property type="gene ID" value="Os04g0448900"/>
</dbReference>
<dbReference type="GeneID" id="4335984"/>
<dbReference type="Gramene" id="Os04t0448900-01">
    <property type="protein sequence ID" value="Os04t0448900-01"/>
    <property type="gene ID" value="Os04g0448900"/>
</dbReference>
<dbReference type="KEGG" id="dosa:Os04g0448900"/>
<dbReference type="eggNOG" id="KOG2614">
    <property type="taxonomic scope" value="Eukaryota"/>
</dbReference>
<dbReference type="HOGENOM" id="CLU_009665_16_1_1"/>
<dbReference type="InParanoid" id="Q0JCU7"/>
<dbReference type="OMA" id="CKDNAFY"/>
<dbReference type="OrthoDB" id="655030at2759"/>
<dbReference type="PlantReactome" id="R-OSA-1119449">
    <property type="pathway name" value="Carotenoid biosynthesis"/>
</dbReference>
<dbReference type="UniPathway" id="UPA00090"/>
<dbReference type="Proteomes" id="UP000000763">
    <property type="component" value="Chromosome 4"/>
</dbReference>
<dbReference type="Proteomes" id="UP000059680">
    <property type="component" value="Chromosome 4"/>
</dbReference>
<dbReference type="GO" id="GO:0031969">
    <property type="term" value="C:chloroplast membrane"/>
    <property type="evidence" value="ECO:0007669"/>
    <property type="project" value="UniProtKB-SubCell"/>
</dbReference>
<dbReference type="GO" id="GO:0009535">
    <property type="term" value="C:chloroplast thylakoid membrane"/>
    <property type="evidence" value="ECO:0007669"/>
    <property type="project" value="UniProtKB-SubCell"/>
</dbReference>
<dbReference type="GO" id="GO:0071949">
    <property type="term" value="F:FAD binding"/>
    <property type="evidence" value="ECO:0007669"/>
    <property type="project" value="InterPro"/>
</dbReference>
<dbReference type="GO" id="GO:0052662">
    <property type="term" value="F:zeaxanthin epoxidase activity"/>
    <property type="evidence" value="ECO:0000315"/>
    <property type="project" value="UniProtKB"/>
</dbReference>
<dbReference type="GO" id="GO:0009688">
    <property type="term" value="P:abscisic acid biosynthetic process"/>
    <property type="evidence" value="ECO:0000315"/>
    <property type="project" value="UniProtKB"/>
</dbReference>
<dbReference type="GO" id="GO:0050891">
    <property type="term" value="P:multicellular organismal-level water homeostasis"/>
    <property type="evidence" value="ECO:0000315"/>
    <property type="project" value="UniProtKB"/>
</dbReference>
<dbReference type="GO" id="GO:0009414">
    <property type="term" value="P:response to water deprivation"/>
    <property type="evidence" value="ECO:0000315"/>
    <property type="project" value="UniProtKB"/>
</dbReference>
<dbReference type="GO" id="GO:0016123">
    <property type="term" value="P:xanthophyll biosynthetic process"/>
    <property type="evidence" value="ECO:0000315"/>
    <property type="project" value="UniProtKB"/>
</dbReference>
<dbReference type="CDD" id="cd22702">
    <property type="entry name" value="FHA_ZEP-like"/>
    <property type="match status" value="1"/>
</dbReference>
<dbReference type="FunFam" id="2.60.200.20:FF:000048">
    <property type="entry name" value="Zeaxanthin epoxidase, chloroplastic"/>
    <property type="match status" value="1"/>
</dbReference>
<dbReference type="FunFam" id="3.50.50.60:FF:000263">
    <property type="entry name" value="Zeaxanthin epoxidase, chloroplastic"/>
    <property type="match status" value="1"/>
</dbReference>
<dbReference type="Gene3D" id="2.60.200.20">
    <property type="match status" value="1"/>
</dbReference>
<dbReference type="Gene3D" id="3.50.50.60">
    <property type="entry name" value="FAD/NAD(P)-binding domain"/>
    <property type="match status" value="1"/>
</dbReference>
<dbReference type="InterPro" id="IPR002938">
    <property type="entry name" value="FAD-bd"/>
</dbReference>
<dbReference type="InterPro" id="IPR036188">
    <property type="entry name" value="FAD/NAD-bd_sf"/>
</dbReference>
<dbReference type="InterPro" id="IPR000253">
    <property type="entry name" value="FHA_dom"/>
</dbReference>
<dbReference type="InterPro" id="IPR008984">
    <property type="entry name" value="SMAD_FHA_dom_sf"/>
</dbReference>
<dbReference type="InterPro" id="IPR017079">
    <property type="entry name" value="Zeaxanthin_epoxidase"/>
</dbReference>
<dbReference type="PANTHER" id="PTHR46496">
    <property type="match status" value="1"/>
</dbReference>
<dbReference type="PANTHER" id="PTHR46496:SF1">
    <property type="entry name" value="ZEAXANTHIN EPOXIDASE, CHLOROPLASTIC"/>
    <property type="match status" value="1"/>
</dbReference>
<dbReference type="Pfam" id="PF01494">
    <property type="entry name" value="FAD_binding_3"/>
    <property type="match status" value="1"/>
</dbReference>
<dbReference type="Pfam" id="PF00498">
    <property type="entry name" value="FHA"/>
    <property type="match status" value="1"/>
</dbReference>
<dbReference type="PIRSF" id="PIRSF036989">
    <property type="entry name" value="Zeaxanthin_epoxidase"/>
    <property type="match status" value="1"/>
</dbReference>
<dbReference type="PRINTS" id="PR00420">
    <property type="entry name" value="RNGMNOXGNASE"/>
</dbReference>
<dbReference type="SMART" id="SM00240">
    <property type="entry name" value="FHA"/>
    <property type="match status" value="1"/>
</dbReference>
<dbReference type="SUPFAM" id="SSF51905">
    <property type="entry name" value="FAD/NAD(P)-binding domain"/>
    <property type="match status" value="1"/>
</dbReference>
<dbReference type="SUPFAM" id="SSF49879">
    <property type="entry name" value="SMAD/FHA domain"/>
    <property type="match status" value="1"/>
</dbReference>
<dbReference type="PROSITE" id="PS50006">
    <property type="entry name" value="FHA_DOMAIN"/>
    <property type="match status" value="1"/>
</dbReference>
<gene>
    <name type="primary">ZEP</name>
    <name type="synonym">ABA1</name>
    <name type="ordered locus">Os04g0448900</name>
    <name type="ordered locus">LOC_Os04g37619</name>
    <name type="ORF">OSJNBa0064H22.16</name>
</gene>
<sequence>MALLSATAPAKTRFSLFSHEEAQHPHPHALSACCGGGASGKRQRARARVAAAMRPADAAASVAQAASPGGGGEGTRRPRVLVAGGGIGGLVLALAARRKGYEVTVFERDMSAVRGEGQYRGPIQIQSNALAALEAIDMSVAEEVMREGCVTGDRINGLVDGISGSWYIKFDTFTPAAERGLPVTRVISRMTLQQILARAVGDDAILNDSHVVDFIDDGNKVTAILEDGRKFEGDLLVGADGIWSKVRKVLFGQSEATYSEYTCYTGIADFVPPDIDTVGYRVFLGHKQYFVSSDVGAGKMQWYAFHKEPAGGTDPENGKNKRLLEIFNGWCDNVVDLINATDEEAILRRDIYDRPPTFNWGKGRVTLLGDSVHAMQPNLGQGGCMAIEDGYQLAVELEKSWQESAKSGTPMDIVSSLRRYEKERILRVSVIHGLARMAAIMATTYRPYLGVGLGPLSFLTKLRIPHPGRVGGRFFIKYGMPLMLSWVLGGNSTKLEGRPLSCRLSDKANDQLRRWFEDDDALEQAMGGEWYLLPTSSGDSQPIRLIRDEKKSLSIGSRSDPSNSTASLALPLPQISENHATITCKNKAFYVTDNGSEHGTWITDNEGRRYRVPPNFPVRFHPSDAIEFGSDKKAVFRVKVLSTLPYESARGGPQILQAA</sequence>
<evidence type="ECO:0000250" key="1"/>
<evidence type="ECO:0000255" key="2"/>
<evidence type="ECO:0000255" key="3">
    <source>
        <dbReference type="PROSITE-ProRule" id="PRU00086"/>
    </source>
</evidence>
<evidence type="ECO:0000269" key="4">
    <source>
    </source>
</evidence>
<evidence type="ECO:0000269" key="5">
    <source>
    </source>
</evidence>
<evidence type="ECO:0000305" key="6"/>
<comment type="function">
    <text evidence="4">Zeaxanthin epoxidase that plays an important role in the xanthophyll cycle and abscisic acid (ABA) biosynthesis. Converts zeaxanthin into antheraxanthin and subsequently violaxanthin. Required for resistance to osmotic and drought stresses, seed development and dormancy.</text>
</comment>
<comment type="catalytic activity">
    <reaction>
        <text>all-trans-zeaxanthin + 4 reduced [2Fe-2S]-[ferredoxin] + 2 O2 + 4 H(+) = all-trans-violaxanthin + 4 oxidized [2Fe-2S]-[ferredoxin] + 2 H2O</text>
        <dbReference type="Rhea" id="RHEA:32443"/>
        <dbReference type="Rhea" id="RHEA-COMP:10000"/>
        <dbReference type="Rhea" id="RHEA-COMP:10001"/>
        <dbReference type="ChEBI" id="CHEBI:15377"/>
        <dbReference type="ChEBI" id="CHEBI:15378"/>
        <dbReference type="ChEBI" id="CHEBI:15379"/>
        <dbReference type="ChEBI" id="CHEBI:27547"/>
        <dbReference type="ChEBI" id="CHEBI:33737"/>
        <dbReference type="ChEBI" id="CHEBI:33738"/>
        <dbReference type="ChEBI" id="CHEBI:35288"/>
        <dbReference type="EC" id="1.14.15.21"/>
    </reaction>
</comment>
<comment type="cofactor">
    <cofactor evidence="6">
        <name>FAD</name>
        <dbReference type="ChEBI" id="CHEBI:57692"/>
    </cofactor>
</comment>
<comment type="pathway">
    <text>Plant hormone biosynthesis; abscisate biosynthesis.</text>
</comment>
<comment type="subcellular location">
    <subcellularLocation>
        <location>Plastid</location>
        <location>Chloroplast membrane</location>
        <topology>Peripheral membrane protein</topology>
    </subcellularLocation>
    <subcellularLocation>
        <location evidence="1">Plastid</location>
        <location evidence="1">Chloroplast thylakoid membrane</location>
        <topology evidence="1">Peripheral membrane protein</topology>
    </subcellularLocation>
</comment>
<comment type="tissue specificity">
    <text evidence="5">Expressed in young microspores.</text>
</comment>
<comment type="induction">
    <text evidence="5">By cold in microspores.</text>
</comment>
<comment type="disruption phenotype">
    <text evidence="4">Accumulation of endogenous zeaxanthin and reduced level of ABA. Wilty phenotype, increased water loss and premature seed germination.</text>
</comment>
<comment type="sequence caution" evidence="6">
    <conflict type="frameshift">
        <sequence resource="EMBL-CDS" id="BAB39765"/>
    </conflict>
</comment>
<comment type="sequence caution" evidence="6">
    <conflict type="erroneous gene model prediction">
        <sequence resource="EMBL-CDS" id="CAD40867"/>
    </conflict>
</comment>
<reference key="1">
    <citation type="journal article" date="2001" name="Plant Physiol.">
        <title>Screening of the rice viviparous mutants generated by endogenous retrotransposon Tos17 insertion. Tagging of a zeaxanthin epoxidase gene and a novel ostatc gene.</title>
        <authorList>
            <person name="Agrawal G.K."/>
            <person name="Yamazaki M."/>
            <person name="Kobayashi M."/>
            <person name="Hirochika R."/>
            <person name="Miyao A."/>
            <person name="Hirochika H."/>
        </authorList>
    </citation>
    <scope>NUCLEOTIDE SEQUENCE [MRNA]</scope>
    <scope>FUNCTION</scope>
    <scope>DISRUPTION PHENOTYPE</scope>
</reference>
<reference key="2">
    <citation type="journal article" date="2002" name="Nature">
        <title>Sequence and analysis of rice chromosome 4.</title>
        <authorList>
            <person name="Feng Q."/>
            <person name="Zhang Y."/>
            <person name="Hao P."/>
            <person name="Wang S."/>
            <person name="Fu G."/>
            <person name="Huang Y."/>
            <person name="Li Y."/>
            <person name="Zhu J."/>
            <person name="Liu Y."/>
            <person name="Hu X."/>
            <person name="Jia P."/>
            <person name="Zhang Y."/>
            <person name="Zhao Q."/>
            <person name="Ying K."/>
            <person name="Yu S."/>
            <person name="Tang Y."/>
            <person name="Weng Q."/>
            <person name="Zhang L."/>
            <person name="Lu Y."/>
            <person name="Mu J."/>
            <person name="Lu Y."/>
            <person name="Zhang L.S."/>
            <person name="Yu Z."/>
            <person name="Fan D."/>
            <person name="Liu X."/>
            <person name="Lu T."/>
            <person name="Li C."/>
            <person name="Wu Y."/>
            <person name="Sun T."/>
            <person name="Lei H."/>
            <person name="Li T."/>
            <person name="Hu H."/>
            <person name="Guan J."/>
            <person name="Wu M."/>
            <person name="Zhang R."/>
            <person name="Zhou B."/>
            <person name="Chen Z."/>
            <person name="Chen L."/>
            <person name="Jin Z."/>
            <person name="Wang R."/>
            <person name="Yin H."/>
            <person name="Cai Z."/>
            <person name="Ren S."/>
            <person name="Lv G."/>
            <person name="Gu W."/>
            <person name="Zhu G."/>
            <person name="Tu Y."/>
            <person name="Jia J."/>
            <person name="Zhang Y."/>
            <person name="Chen J."/>
            <person name="Kang H."/>
            <person name="Chen X."/>
            <person name="Shao C."/>
            <person name="Sun Y."/>
            <person name="Hu Q."/>
            <person name="Zhang X."/>
            <person name="Zhang W."/>
            <person name="Wang L."/>
            <person name="Ding C."/>
            <person name="Sheng H."/>
            <person name="Gu J."/>
            <person name="Chen S."/>
            <person name="Ni L."/>
            <person name="Zhu F."/>
            <person name="Chen W."/>
            <person name="Lan L."/>
            <person name="Lai Y."/>
            <person name="Cheng Z."/>
            <person name="Gu M."/>
            <person name="Jiang J."/>
            <person name="Li J."/>
            <person name="Hong G."/>
            <person name="Xue Y."/>
            <person name="Han B."/>
        </authorList>
    </citation>
    <scope>NUCLEOTIDE SEQUENCE [LARGE SCALE GENOMIC DNA]</scope>
    <source>
        <strain>cv. Nipponbare</strain>
    </source>
</reference>
<reference key="3">
    <citation type="journal article" date="2005" name="Nature">
        <title>The map-based sequence of the rice genome.</title>
        <authorList>
            <consortium name="International rice genome sequencing project (IRGSP)"/>
        </authorList>
    </citation>
    <scope>NUCLEOTIDE SEQUENCE [LARGE SCALE GENOMIC DNA]</scope>
    <source>
        <strain>cv. Nipponbare</strain>
    </source>
</reference>
<reference key="4">
    <citation type="journal article" date="2008" name="Nucleic Acids Res.">
        <title>The rice annotation project database (RAP-DB): 2008 update.</title>
        <authorList>
            <consortium name="The rice annotation project (RAP)"/>
        </authorList>
    </citation>
    <scope>GENOME REANNOTATION</scope>
    <source>
        <strain>cv. Nipponbare</strain>
    </source>
</reference>
<reference key="5">
    <citation type="journal article" date="2013" name="Rice">
        <title>Improvement of the Oryza sativa Nipponbare reference genome using next generation sequence and optical map data.</title>
        <authorList>
            <person name="Kawahara Y."/>
            <person name="de la Bastide M."/>
            <person name="Hamilton J.P."/>
            <person name="Kanamori H."/>
            <person name="McCombie W.R."/>
            <person name="Ouyang S."/>
            <person name="Schwartz D.C."/>
            <person name="Tanaka T."/>
            <person name="Wu J."/>
            <person name="Zhou S."/>
            <person name="Childs K.L."/>
            <person name="Davidson R.M."/>
            <person name="Lin H."/>
            <person name="Quesada-Ocampo L."/>
            <person name="Vaillancourt B."/>
            <person name="Sakai H."/>
            <person name="Lee S.S."/>
            <person name="Kim J."/>
            <person name="Numa H."/>
            <person name="Itoh T."/>
            <person name="Buell C.R."/>
            <person name="Matsumoto T."/>
        </authorList>
    </citation>
    <scope>GENOME REANNOTATION</scope>
    <source>
        <strain>cv. Nipponbare</strain>
    </source>
</reference>
<reference key="6">
    <citation type="journal article" date="2007" name="Plant Cell Physiol.">
        <title>ABA regulates apoplastic sugar transport and is a potential signal for cold-induced pollen sterility in rice.</title>
        <authorList>
            <person name="Oliver S.N."/>
            <person name="Dennis E.S."/>
            <person name="Dolferus R."/>
        </authorList>
    </citation>
    <scope>TISSUE SPECIFICITY</scope>
    <scope>INDUCTION BY COLD</scope>
</reference>
<keyword id="KW-0937">Abscisic acid biosynthesis</keyword>
<keyword id="KW-0150">Chloroplast</keyword>
<keyword id="KW-0274">FAD</keyword>
<keyword id="KW-0285">Flavoprotein</keyword>
<keyword id="KW-0472">Membrane</keyword>
<keyword id="KW-0560">Oxidoreductase</keyword>
<keyword id="KW-0934">Plastid</keyword>
<keyword id="KW-1185">Reference proteome</keyword>
<keyword id="KW-0346">Stress response</keyword>
<keyword id="KW-0793">Thylakoid</keyword>
<keyword id="KW-0809">Transit peptide</keyword>
<organism>
    <name type="scientific">Oryza sativa subsp. japonica</name>
    <name type="common">Rice</name>
    <dbReference type="NCBI Taxonomy" id="39947"/>
    <lineage>
        <taxon>Eukaryota</taxon>
        <taxon>Viridiplantae</taxon>
        <taxon>Streptophyta</taxon>
        <taxon>Embryophyta</taxon>
        <taxon>Tracheophyta</taxon>
        <taxon>Spermatophyta</taxon>
        <taxon>Magnoliopsida</taxon>
        <taxon>Liliopsida</taxon>
        <taxon>Poales</taxon>
        <taxon>Poaceae</taxon>
        <taxon>BOP clade</taxon>
        <taxon>Oryzoideae</taxon>
        <taxon>Oryzeae</taxon>
        <taxon>Oryzinae</taxon>
        <taxon>Oryza</taxon>
        <taxon>Oryza sativa</taxon>
    </lineage>
</organism>
<accession>Q0JCU7</accession>
<accession>A0A0P0WB86</accession>
<accession>Q7XV26</accession>
<accession>Q9AVE7</accession>
<feature type="transit peptide" description="Chloroplast" evidence="2">
    <location>
        <begin position="1"/>
        <end position="50"/>
    </location>
</feature>
<feature type="chain" id="PRO_0000412073" description="Zeaxanthin epoxidase, chloroplastic">
    <location>
        <begin position="51"/>
        <end position="659"/>
    </location>
</feature>
<feature type="domain" description="FHA" evidence="3">
    <location>
        <begin position="553"/>
        <end position="607"/>
    </location>
</feature>
<feature type="binding site" evidence="2">
    <location>
        <begin position="79"/>
        <end position="107"/>
    </location>
    <ligand>
        <name>FAD</name>
        <dbReference type="ChEBI" id="CHEBI:57692"/>
    </ligand>
</feature>
<feature type="binding site" evidence="2">
    <location>
        <begin position="357"/>
        <end position="370"/>
    </location>
    <ligand>
        <name>FAD</name>
        <dbReference type="ChEBI" id="CHEBI:57692"/>
    </ligand>
</feature>
<feature type="sequence conflict" description="In Ref. 1; BAB39765." evidence="6" ref="1">
    <original>E</original>
    <variation>A</variation>
    <location>
        <position position="134"/>
    </location>
</feature>
<name>ZEP_ORYSJ</name>